<organism>
    <name type="scientific">Rickettsia conorii (strain ATCC VR-613 / Malish 7)</name>
    <dbReference type="NCBI Taxonomy" id="272944"/>
    <lineage>
        <taxon>Bacteria</taxon>
        <taxon>Pseudomonadati</taxon>
        <taxon>Pseudomonadota</taxon>
        <taxon>Alphaproteobacteria</taxon>
        <taxon>Rickettsiales</taxon>
        <taxon>Rickettsiaceae</taxon>
        <taxon>Rickettsieae</taxon>
        <taxon>Rickettsia</taxon>
        <taxon>spotted fever group</taxon>
    </lineage>
</organism>
<accession>Q92H56</accession>
<evidence type="ECO:0000255" key="1">
    <source>
        <dbReference type="HAMAP-Rule" id="MF_00377"/>
    </source>
</evidence>
<proteinExistence type="inferred from homology"/>
<reference key="1">
    <citation type="journal article" date="2001" name="Science">
        <title>Mechanisms of evolution in Rickettsia conorii and R. prowazekii.</title>
        <authorList>
            <person name="Ogata H."/>
            <person name="Audic S."/>
            <person name="Renesto-Audiffren P."/>
            <person name="Fournier P.-E."/>
            <person name="Barbe V."/>
            <person name="Samson D."/>
            <person name="Roux V."/>
            <person name="Cossart P."/>
            <person name="Weissenbach J."/>
            <person name="Claverie J.-M."/>
            <person name="Raoult D."/>
        </authorList>
    </citation>
    <scope>NUCLEOTIDE SEQUENCE [LARGE SCALE GENOMIC DNA]</scope>
    <source>
        <strain>ATCC VR-613 / Malish 7</strain>
    </source>
</reference>
<keyword id="KW-0067">ATP-binding</keyword>
<keyword id="KW-0963">Cytoplasm</keyword>
<keyword id="KW-0235">DNA replication</keyword>
<keyword id="KW-0238">DNA-binding</keyword>
<keyword id="KW-0446">Lipid-binding</keyword>
<keyword id="KW-0547">Nucleotide-binding</keyword>
<protein>
    <recommendedName>
        <fullName evidence="1">Chromosomal replication initiator protein DnaA</fullName>
    </recommendedName>
</protein>
<feature type="chain" id="PRO_0000114246" description="Chromosomal replication initiator protein DnaA">
    <location>
        <begin position="1"/>
        <end position="463"/>
    </location>
</feature>
<feature type="region of interest" description="Domain I, interacts with DnaA modulators" evidence="1">
    <location>
        <begin position="1"/>
        <end position="83"/>
    </location>
</feature>
<feature type="region of interest" description="Domain II" evidence="1">
    <location>
        <begin position="83"/>
        <end position="124"/>
    </location>
</feature>
<feature type="region of interest" description="Domain III, AAA+ region" evidence="1">
    <location>
        <begin position="125"/>
        <end position="343"/>
    </location>
</feature>
<feature type="region of interest" description="Domain IV, binds dsDNA" evidence="1">
    <location>
        <begin position="344"/>
        <end position="463"/>
    </location>
</feature>
<feature type="binding site" evidence="1">
    <location>
        <position position="171"/>
    </location>
    <ligand>
        <name>ATP</name>
        <dbReference type="ChEBI" id="CHEBI:30616"/>
    </ligand>
</feature>
<feature type="binding site" evidence="1">
    <location>
        <position position="173"/>
    </location>
    <ligand>
        <name>ATP</name>
        <dbReference type="ChEBI" id="CHEBI:30616"/>
    </ligand>
</feature>
<feature type="binding site" evidence="1">
    <location>
        <position position="174"/>
    </location>
    <ligand>
        <name>ATP</name>
        <dbReference type="ChEBI" id="CHEBI:30616"/>
    </ligand>
</feature>
<feature type="binding site" evidence="1">
    <location>
        <position position="175"/>
    </location>
    <ligand>
        <name>ATP</name>
        <dbReference type="ChEBI" id="CHEBI:30616"/>
    </ligand>
</feature>
<sequence>MSTNQIILTDQGDNYVNVWSHVAQDLYNHYGETLYNSWFSKVNFIESSLNTVILCAPTNFVRDWIKSKYSMVILQLFQHYNNTIKSIEIITKELPGTTQTVTELPTKTFADIGSSELNSENIFSTLDVRFTFDNFVVGAPNELAYAAARAVAESSGAVSESNPLFLYGGVGLGKTHLMHAIGWYIKQHNPSRKVIYMSAEKFMYQFVKALRNKEVISFKEKFRSVDVLMIDDIQFICGKDSTQEEFFHTFNTLIDNNRQMVISCDRSPSDLDNIEDRIKSRLGWGLVADVHSTTYELRLGILESKIEQMNVKIPKDVIDFLASKIVSNVRELEGALNKVIAHSNFTLKEITLENTQNILRDLLRSNERIITVEDIQKKVASRYNIKLSDMSSSRRLREVARPRQIAMYLSKALTPKSLADIGKKFGKKDHTTVMHAIKKVEELLENDIELREEINLLMKILQN</sequence>
<dbReference type="EMBL" id="AE006914">
    <property type="protein sequence ID" value="AAL03454.1"/>
    <property type="molecule type" value="Genomic_DNA"/>
</dbReference>
<dbReference type="PIR" id="D97814">
    <property type="entry name" value="D97814"/>
</dbReference>
<dbReference type="RefSeq" id="WP_010977515.1">
    <property type="nucleotide sequence ID" value="NC_003103.1"/>
</dbReference>
<dbReference type="SMR" id="Q92H56"/>
<dbReference type="GeneID" id="927916"/>
<dbReference type="KEGG" id="rco:RC0916"/>
<dbReference type="HOGENOM" id="CLU_026910_3_0_5"/>
<dbReference type="Proteomes" id="UP000000816">
    <property type="component" value="Chromosome"/>
</dbReference>
<dbReference type="GO" id="GO:0005737">
    <property type="term" value="C:cytoplasm"/>
    <property type="evidence" value="ECO:0007669"/>
    <property type="project" value="UniProtKB-SubCell"/>
</dbReference>
<dbReference type="GO" id="GO:0005886">
    <property type="term" value="C:plasma membrane"/>
    <property type="evidence" value="ECO:0007669"/>
    <property type="project" value="TreeGrafter"/>
</dbReference>
<dbReference type="GO" id="GO:0005524">
    <property type="term" value="F:ATP binding"/>
    <property type="evidence" value="ECO:0007669"/>
    <property type="project" value="UniProtKB-UniRule"/>
</dbReference>
<dbReference type="GO" id="GO:0016887">
    <property type="term" value="F:ATP hydrolysis activity"/>
    <property type="evidence" value="ECO:0007669"/>
    <property type="project" value="InterPro"/>
</dbReference>
<dbReference type="GO" id="GO:0003688">
    <property type="term" value="F:DNA replication origin binding"/>
    <property type="evidence" value="ECO:0007669"/>
    <property type="project" value="UniProtKB-UniRule"/>
</dbReference>
<dbReference type="GO" id="GO:0008289">
    <property type="term" value="F:lipid binding"/>
    <property type="evidence" value="ECO:0007669"/>
    <property type="project" value="UniProtKB-KW"/>
</dbReference>
<dbReference type="GO" id="GO:0006270">
    <property type="term" value="P:DNA replication initiation"/>
    <property type="evidence" value="ECO:0007669"/>
    <property type="project" value="UniProtKB-UniRule"/>
</dbReference>
<dbReference type="GO" id="GO:0006275">
    <property type="term" value="P:regulation of DNA replication"/>
    <property type="evidence" value="ECO:0007669"/>
    <property type="project" value="UniProtKB-UniRule"/>
</dbReference>
<dbReference type="CDD" id="cd00009">
    <property type="entry name" value="AAA"/>
    <property type="match status" value="1"/>
</dbReference>
<dbReference type="CDD" id="cd06571">
    <property type="entry name" value="Bac_DnaA_C"/>
    <property type="match status" value="1"/>
</dbReference>
<dbReference type="FunFam" id="3.40.50.300:FF:000668">
    <property type="entry name" value="Chromosomal replication initiator protein DnaA"/>
    <property type="match status" value="1"/>
</dbReference>
<dbReference type="Gene3D" id="1.10.1750.10">
    <property type="match status" value="1"/>
</dbReference>
<dbReference type="Gene3D" id="1.10.8.60">
    <property type="match status" value="1"/>
</dbReference>
<dbReference type="Gene3D" id="3.30.300.180">
    <property type="match status" value="1"/>
</dbReference>
<dbReference type="Gene3D" id="3.40.50.300">
    <property type="entry name" value="P-loop containing nucleotide triphosphate hydrolases"/>
    <property type="match status" value="1"/>
</dbReference>
<dbReference type="HAMAP" id="MF_00377">
    <property type="entry name" value="DnaA_bact"/>
    <property type="match status" value="1"/>
</dbReference>
<dbReference type="InterPro" id="IPR003593">
    <property type="entry name" value="AAA+_ATPase"/>
</dbReference>
<dbReference type="InterPro" id="IPR001957">
    <property type="entry name" value="Chromosome_initiator_DnaA"/>
</dbReference>
<dbReference type="InterPro" id="IPR020591">
    <property type="entry name" value="Chromosome_initiator_DnaA-like"/>
</dbReference>
<dbReference type="InterPro" id="IPR018312">
    <property type="entry name" value="Chromosome_initiator_DnaA_CS"/>
</dbReference>
<dbReference type="InterPro" id="IPR013159">
    <property type="entry name" value="DnaA_C"/>
</dbReference>
<dbReference type="InterPro" id="IPR013317">
    <property type="entry name" value="DnaA_dom"/>
</dbReference>
<dbReference type="InterPro" id="IPR024633">
    <property type="entry name" value="DnaA_N_dom"/>
</dbReference>
<dbReference type="InterPro" id="IPR038454">
    <property type="entry name" value="DnaA_N_sf"/>
</dbReference>
<dbReference type="InterPro" id="IPR027417">
    <property type="entry name" value="P-loop_NTPase"/>
</dbReference>
<dbReference type="InterPro" id="IPR010921">
    <property type="entry name" value="Trp_repressor/repl_initiator"/>
</dbReference>
<dbReference type="NCBIfam" id="TIGR00362">
    <property type="entry name" value="DnaA"/>
    <property type="match status" value="1"/>
</dbReference>
<dbReference type="PANTHER" id="PTHR30050">
    <property type="entry name" value="CHROMOSOMAL REPLICATION INITIATOR PROTEIN DNAA"/>
    <property type="match status" value="1"/>
</dbReference>
<dbReference type="PANTHER" id="PTHR30050:SF2">
    <property type="entry name" value="CHROMOSOMAL REPLICATION INITIATOR PROTEIN DNAA"/>
    <property type="match status" value="1"/>
</dbReference>
<dbReference type="Pfam" id="PF00308">
    <property type="entry name" value="Bac_DnaA"/>
    <property type="match status" value="1"/>
</dbReference>
<dbReference type="Pfam" id="PF08299">
    <property type="entry name" value="Bac_DnaA_C"/>
    <property type="match status" value="1"/>
</dbReference>
<dbReference type="Pfam" id="PF11638">
    <property type="entry name" value="DnaA_N"/>
    <property type="match status" value="1"/>
</dbReference>
<dbReference type="PRINTS" id="PR00051">
    <property type="entry name" value="DNAA"/>
</dbReference>
<dbReference type="SMART" id="SM00382">
    <property type="entry name" value="AAA"/>
    <property type="match status" value="1"/>
</dbReference>
<dbReference type="SMART" id="SM00760">
    <property type="entry name" value="Bac_DnaA_C"/>
    <property type="match status" value="1"/>
</dbReference>
<dbReference type="SUPFAM" id="SSF52540">
    <property type="entry name" value="P-loop containing nucleoside triphosphate hydrolases"/>
    <property type="match status" value="1"/>
</dbReference>
<dbReference type="SUPFAM" id="SSF48295">
    <property type="entry name" value="TrpR-like"/>
    <property type="match status" value="1"/>
</dbReference>
<dbReference type="PROSITE" id="PS01008">
    <property type="entry name" value="DNAA"/>
    <property type="match status" value="1"/>
</dbReference>
<gene>
    <name evidence="1" type="primary">dnaA</name>
    <name type="ordered locus">RC0916</name>
</gene>
<comment type="function">
    <text evidence="1">Plays an essential role in the initiation and regulation of chromosomal replication. ATP-DnaA binds to the origin of replication (oriC) to initiate formation of the DNA replication initiation complex once per cell cycle. Binds the DnaA box (a 9 base pair repeat at the origin) and separates the double-stranded (ds)DNA. Forms a right-handed helical filament on oriC DNA; dsDNA binds to the exterior of the filament while single-stranded (ss)DNA is stabiized in the filament's interior. The ATP-DnaA-oriC complex binds and stabilizes one strand of the AT-rich DNA unwinding element (DUE), permitting loading of DNA polymerase. After initiation quickly degrades to an ADP-DnaA complex that is not apt for DNA replication. Binds acidic phospholipids.</text>
</comment>
<comment type="subunit">
    <text evidence="1">Oligomerizes as a right-handed, spiral filament on DNA at oriC.</text>
</comment>
<comment type="subcellular location">
    <subcellularLocation>
        <location evidence="1">Cytoplasm</location>
    </subcellularLocation>
</comment>
<comment type="domain">
    <text evidence="1">Domain I is involved in oligomerization and binding regulators, domain II is flexibile and of varying length in different bacteria, domain III forms the AAA+ region, while domain IV binds dsDNA.</text>
</comment>
<comment type="similarity">
    <text evidence="1">Belongs to the DnaA family.</text>
</comment>
<name>DNAA_RICCN</name>